<sequence>MPHLAELVAKARTAIEEAQDVAALENVRVEYLGKKGHLTLQMTSLRELPAEERPAAGAVINQAKQDVQDALNARKQTLESAELNARLAQETIDVSLPGRTIENGGLHPVTRTIDRIETFFGELGFSVVTGPEIEDDYHNFDALNIPGHHPARADHDTFWFDAKRLLRTQTSGVQIRTMEKQQPPIRIIAPGRVYRNDYDQTHTPMFHQMEGLIVDKDISFTNLKGTLHDFLRNFFEEDLQVRFRPSYFPFTEPSAEVDVMGKNGKWLEVLGCGMVHPNVLRNVGIDPEVYSGFAFGMGMERLTMLRYGVTDLRAFFENDLRFLKQFK</sequence>
<protein>
    <recommendedName>
        <fullName evidence="1">Phenylalanine--tRNA ligase alpha subunit</fullName>
        <ecNumber evidence="1">6.1.1.20</ecNumber>
    </recommendedName>
    <alternativeName>
        <fullName evidence="1">Phenylalanyl-tRNA synthetase alpha subunit</fullName>
        <shortName evidence="1">PheRS</shortName>
    </alternativeName>
</protein>
<keyword id="KW-0030">Aminoacyl-tRNA synthetase</keyword>
<keyword id="KW-0067">ATP-binding</keyword>
<keyword id="KW-0963">Cytoplasm</keyword>
<keyword id="KW-0436">Ligase</keyword>
<keyword id="KW-0460">Magnesium</keyword>
<keyword id="KW-0479">Metal-binding</keyword>
<keyword id="KW-0547">Nucleotide-binding</keyword>
<keyword id="KW-0648">Protein biosynthesis</keyword>
<keyword id="KW-1185">Reference proteome</keyword>
<comment type="catalytic activity">
    <reaction evidence="1">
        <text>tRNA(Phe) + L-phenylalanine + ATP = L-phenylalanyl-tRNA(Phe) + AMP + diphosphate + H(+)</text>
        <dbReference type="Rhea" id="RHEA:19413"/>
        <dbReference type="Rhea" id="RHEA-COMP:9668"/>
        <dbReference type="Rhea" id="RHEA-COMP:9699"/>
        <dbReference type="ChEBI" id="CHEBI:15378"/>
        <dbReference type="ChEBI" id="CHEBI:30616"/>
        <dbReference type="ChEBI" id="CHEBI:33019"/>
        <dbReference type="ChEBI" id="CHEBI:58095"/>
        <dbReference type="ChEBI" id="CHEBI:78442"/>
        <dbReference type="ChEBI" id="CHEBI:78531"/>
        <dbReference type="ChEBI" id="CHEBI:456215"/>
        <dbReference type="EC" id="6.1.1.20"/>
    </reaction>
</comment>
<comment type="cofactor">
    <cofactor evidence="1">
        <name>Mg(2+)</name>
        <dbReference type="ChEBI" id="CHEBI:18420"/>
    </cofactor>
    <text evidence="1">Binds 2 magnesium ions per tetramer.</text>
</comment>
<comment type="subunit">
    <text evidence="1">Tetramer of two alpha and two beta subunits.</text>
</comment>
<comment type="subcellular location">
    <subcellularLocation>
        <location evidence="1">Cytoplasm</location>
    </subcellularLocation>
</comment>
<comment type="similarity">
    <text evidence="1">Belongs to the class-II aminoacyl-tRNA synthetase family. Phe-tRNA synthetase alpha subunit type 1 subfamily.</text>
</comment>
<reference key="1">
    <citation type="journal article" date="2004" name="Proc. Natl. Acad. Sci. U.S.A.">
        <title>Genome sequence of the enterobacterial phytopathogen Erwinia carotovora subsp. atroseptica and characterization of virulence factors.</title>
        <authorList>
            <person name="Bell K.S."/>
            <person name="Sebaihia M."/>
            <person name="Pritchard L."/>
            <person name="Holden M.T.G."/>
            <person name="Hyman L.J."/>
            <person name="Holeva M.C."/>
            <person name="Thomson N.R."/>
            <person name="Bentley S.D."/>
            <person name="Churcher L.J.C."/>
            <person name="Mungall K."/>
            <person name="Atkin R."/>
            <person name="Bason N."/>
            <person name="Brooks K."/>
            <person name="Chillingworth T."/>
            <person name="Clark K."/>
            <person name="Doggett J."/>
            <person name="Fraser A."/>
            <person name="Hance Z."/>
            <person name="Hauser H."/>
            <person name="Jagels K."/>
            <person name="Moule S."/>
            <person name="Norbertczak H."/>
            <person name="Ormond D."/>
            <person name="Price C."/>
            <person name="Quail M.A."/>
            <person name="Sanders M."/>
            <person name="Walker D."/>
            <person name="Whitehead S."/>
            <person name="Salmond G.P.C."/>
            <person name="Birch P.R.J."/>
            <person name="Parkhill J."/>
            <person name="Toth I.K."/>
        </authorList>
    </citation>
    <scope>NUCLEOTIDE SEQUENCE [LARGE SCALE GENOMIC DNA]</scope>
    <source>
        <strain>SCRI 1043 / ATCC BAA-672</strain>
    </source>
</reference>
<name>SYFA_PECAS</name>
<proteinExistence type="inferred from homology"/>
<gene>
    <name evidence="1" type="primary">pheS</name>
    <name type="ordered locus">ECA2418</name>
</gene>
<feature type="chain" id="PRO_0000126705" description="Phenylalanine--tRNA ligase alpha subunit">
    <location>
        <begin position="1"/>
        <end position="327"/>
    </location>
</feature>
<feature type="binding site" evidence="1">
    <location>
        <position position="252"/>
    </location>
    <ligand>
        <name>Mg(2+)</name>
        <dbReference type="ChEBI" id="CHEBI:18420"/>
        <note>shared with beta subunit</note>
    </ligand>
</feature>
<accession>Q6D4H2</accession>
<dbReference type="EC" id="6.1.1.20" evidence="1"/>
<dbReference type="EMBL" id="BX950851">
    <property type="protein sequence ID" value="CAG75321.1"/>
    <property type="molecule type" value="Genomic_DNA"/>
</dbReference>
<dbReference type="RefSeq" id="WP_011093972.1">
    <property type="nucleotide sequence ID" value="NC_004547.2"/>
</dbReference>
<dbReference type="SMR" id="Q6D4H2"/>
<dbReference type="STRING" id="218491.ECA2418"/>
<dbReference type="GeneID" id="57208865"/>
<dbReference type="KEGG" id="eca:ECA2418"/>
<dbReference type="eggNOG" id="COG0016">
    <property type="taxonomic scope" value="Bacteria"/>
</dbReference>
<dbReference type="HOGENOM" id="CLU_025086_0_1_6"/>
<dbReference type="OrthoDB" id="9800719at2"/>
<dbReference type="Proteomes" id="UP000007966">
    <property type="component" value="Chromosome"/>
</dbReference>
<dbReference type="GO" id="GO:0005737">
    <property type="term" value="C:cytoplasm"/>
    <property type="evidence" value="ECO:0007669"/>
    <property type="project" value="UniProtKB-SubCell"/>
</dbReference>
<dbReference type="GO" id="GO:0005524">
    <property type="term" value="F:ATP binding"/>
    <property type="evidence" value="ECO:0007669"/>
    <property type="project" value="UniProtKB-UniRule"/>
</dbReference>
<dbReference type="GO" id="GO:0000287">
    <property type="term" value="F:magnesium ion binding"/>
    <property type="evidence" value="ECO:0007669"/>
    <property type="project" value="UniProtKB-UniRule"/>
</dbReference>
<dbReference type="GO" id="GO:0004826">
    <property type="term" value="F:phenylalanine-tRNA ligase activity"/>
    <property type="evidence" value="ECO:0007669"/>
    <property type="project" value="UniProtKB-UniRule"/>
</dbReference>
<dbReference type="GO" id="GO:0000049">
    <property type="term" value="F:tRNA binding"/>
    <property type="evidence" value="ECO:0007669"/>
    <property type="project" value="InterPro"/>
</dbReference>
<dbReference type="GO" id="GO:0006432">
    <property type="term" value="P:phenylalanyl-tRNA aminoacylation"/>
    <property type="evidence" value="ECO:0007669"/>
    <property type="project" value="UniProtKB-UniRule"/>
</dbReference>
<dbReference type="CDD" id="cd00496">
    <property type="entry name" value="PheRS_alpha_core"/>
    <property type="match status" value="1"/>
</dbReference>
<dbReference type="FunFam" id="3.30.930.10:FF:000003">
    <property type="entry name" value="Phenylalanine--tRNA ligase alpha subunit"/>
    <property type="match status" value="1"/>
</dbReference>
<dbReference type="Gene3D" id="3.30.930.10">
    <property type="entry name" value="Bira Bifunctional Protein, Domain 2"/>
    <property type="match status" value="1"/>
</dbReference>
<dbReference type="HAMAP" id="MF_00281">
    <property type="entry name" value="Phe_tRNA_synth_alpha1"/>
    <property type="match status" value="1"/>
</dbReference>
<dbReference type="InterPro" id="IPR006195">
    <property type="entry name" value="aa-tRNA-synth_II"/>
</dbReference>
<dbReference type="InterPro" id="IPR045864">
    <property type="entry name" value="aa-tRNA-synth_II/BPL/LPL"/>
</dbReference>
<dbReference type="InterPro" id="IPR004529">
    <property type="entry name" value="Phe-tRNA-synth_IIc_asu"/>
</dbReference>
<dbReference type="InterPro" id="IPR004188">
    <property type="entry name" value="Phe-tRNA_ligase_II_N"/>
</dbReference>
<dbReference type="InterPro" id="IPR022911">
    <property type="entry name" value="Phe_tRNA_ligase_alpha1_bac"/>
</dbReference>
<dbReference type="InterPro" id="IPR002319">
    <property type="entry name" value="Phenylalanyl-tRNA_Synthase"/>
</dbReference>
<dbReference type="InterPro" id="IPR010978">
    <property type="entry name" value="tRNA-bd_arm"/>
</dbReference>
<dbReference type="NCBIfam" id="TIGR00468">
    <property type="entry name" value="pheS"/>
    <property type="match status" value="1"/>
</dbReference>
<dbReference type="PANTHER" id="PTHR11538:SF41">
    <property type="entry name" value="PHENYLALANINE--TRNA LIGASE, MITOCHONDRIAL"/>
    <property type="match status" value="1"/>
</dbReference>
<dbReference type="PANTHER" id="PTHR11538">
    <property type="entry name" value="PHENYLALANYL-TRNA SYNTHETASE"/>
    <property type="match status" value="1"/>
</dbReference>
<dbReference type="Pfam" id="PF02912">
    <property type="entry name" value="Phe_tRNA-synt_N"/>
    <property type="match status" value="1"/>
</dbReference>
<dbReference type="Pfam" id="PF01409">
    <property type="entry name" value="tRNA-synt_2d"/>
    <property type="match status" value="1"/>
</dbReference>
<dbReference type="SUPFAM" id="SSF55681">
    <property type="entry name" value="Class II aaRS and biotin synthetases"/>
    <property type="match status" value="1"/>
</dbReference>
<dbReference type="SUPFAM" id="SSF46589">
    <property type="entry name" value="tRNA-binding arm"/>
    <property type="match status" value="1"/>
</dbReference>
<dbReference type="PROSITE" id="PS50862">
    <property type="entry name" value="AA_TRNA_LIGASE_II"/>
    <property type="match status" value="1"/>
</dbReference>
<evidence type="ECO:0000255" key="1">
    <source>
        <dbReference type="HAMAP-Rule" id="MF_00281"/>
    </source>
</evidence>
<organism>
    <name type="scientific">Pectobacterium atrosepticum (strain SCRI 1043 / ATCC BAA-672)</name>
    <name type="common">Erwinia carotovora subsp. atroseptica</name>
    <dbReference type="NCBI Taxonomy" id="218491"/>
    <lineage>
        <taxon>Bacteria</taxon>
        <taxon>Pseudomonadati</taxon>
        <taxon>Pseudomonadota</taxon>
        <taxon>Gammaproteobacteria</taxon>
        <taxon>Enterobacterales</taxon>
        <taxon>Pectobacteriaceae</taxon>
        <taxon>Pectobacterium</taxon>
    </lineage>
</organism>